<name>ACES_TORMA</name>
<gene>
    <name type="primary">ache</name>
</gene>
<reference key="1">
    <citation type="journal article" date="1987" name="EMBO J.">
        <title>cDNA sequences of Torpedo marmorata acetylcholinesterase: primary structure of the precursor of a catalytic subunit; existence of multiple 5'-untranslated regions.</title>
        <authorList>
            <person name="Sikorav J.-L."/>
            <person name="Krejci E."/>
            <person name="Massoulie J."/>
        </authorList>
    </citation>
    <scope>NUCLEOTIDE SEQUENCE [MRNA]</scope>
    <source>
        <tissue>Electric organ</tissue>
    </source>
</reference>
<reference key="2">
    <citation type="journal article" date="1986" name="FEBS Lett.">
        <title>Identical N-terminal peptide sequences of asymmetric forms and of low-salt-soluble and detergent-soluble amphiphilic dimers of Torpedo acetylcholinesterase. Comparison with bovine acetylcholinesterase.</title>
        <authorList>
            <person name="Bon S."/>
            <person name="Chang J.Y."/>
            <person name="Strosberg A.D."/>
        </authorList>
    </citation>
    <scope>PROTEIN SEQUENCE OF 25-47</scope>
</reference>
<reference key="3">
    <citation type="journal article" date="1988" name="EMBO J.">
        <title>Complex alternative splicing of acetylcholinesterase transcripts in Torpedo electric organ; primary structure of the precursor of the glycolipid-anchored dimeric form.</title>
        <authorList>
            <person name="Sikorav J.-L."/>
            <person name="Duval N."/>
            <person name="Anselmet A."/>
            <person name="Bon S."/>
            <person name="Krejci E."/>
            <person name="Legay C."/>
            <person name="Osterlund M."/>
            <person name="Reimund B."/>
            <person name="Massoulie J."/>
        </authorList>
    </citation>
    <scope>ALTERNATIVE SPLICING</scope>
    <source>
        <tissue>Electric organ</tissue>
    </source>
</reference>
<reference key="4">
    <citation type="journal article" date="1992" name="EMBO J.">
        <title>Molecular architecture of acetylcholinesterase collagen-tailed forms; construction of a glycolipid-tailed tetramer.</title>
        <authorList>
            <person name="Duval N."/>
            <person name="Krejci E."/>
            <person name="Grassi J."/>
            <person name="Coussen F."/>
            <person name="Massoulie J."/>
            <person name="Bon S."/>
        </authorList>
    </citation>
    <scope>SUBUNITS INTERACTION</scope>
    <source>
        <tissue>Electric organ</tissue>
    </source>
</reference>
<reference key="5">
    <citation type="journal article" date="1992" name="J. Cell Biol.">
        <title>H and T subunits of acetylcholinesterase from Torpedo, expressed in COS cells, generate all types of globular forms.</title>
        <authorList>
            <person name="Duval N."/>
            <person name="Massoulie J."/>
            <person name="Bon S."/>
        </authorList>
    </citation>
    <scope>SUBUNITS INTERACTION</scope>
    <scope>SEQUENCE REVISION TO 421</scope>
</reference>
<protein>
    <recommendedName>
        <fullName>Acetylcholinesterase</fullName>
        <shortName>AChE</shortName>
        <ecNumber>3.1.1.7</ecNumber>
    </recommendedName>
</protein>
<feature type="signal peptide" evidence="6">
    <location>
        <begin position="1"/>
        <end position="24"/>
    </location>
</feature>
<feature type="chain" id="PRO_0000008597" description="Acetylcholinesterase">
    <location>
        <begin position="25"/>
        <end position="567"/>
    </location>
</feature>
<feature type="propeptide" id="PRO_0000008598" description="Removed in mature form">
    <location>
        <begin position="568"/>
        <end position="590"/>
    </location>
</feature>
<feature type="active site" description="Acyl-ester intermediate" evidence="3">
    <location>
        <position position="224"/>
    </location>
</feature>
<feature type="active site" description="Charge relay system" evidence="1">
    <location>
        <position position="351"/>
    </location>
</feature>
<feature type="active site" description="Charge relay system" evidence="1">
    <location>
        <position position="464"/>
    </location>
</feature>
<feature type="lipid moiety-binding region" description="GPI-anchor amidated serine" evidence="1">
    <location>
        <position position="567"/>
    </location>
</feature>
<feature type="glycosylation site" description="N-linked (GlcNAc...) asparagine" evidence="2">
    <location>
        <position position="83"/>
    </location>
</feature>
<feature type="glycosylation site" description="N-linked (GlcNAc...) asparagine" evidence="2">
    <location>
        <position position="440"/>
    </location>
</feature>
<feature type="glycosylation site" description="N-linked (GlcNAc...) asparagine" evidence="2">
    <location>
        <position position="481"/>
    </location>
</feature>
<feature type="glycosylation site" description="N-linked (GlcNAc...) asparagine" evidence="2">
    <location>
        <position position="557"/>
    </location>
</feature>
<feature type="disulfide bond" evidence="1">
    <location>
        <begin position="91"/>
        <end position="118"/>
    </location>
</feature>
<feature type="disulfide bond" evidence="1">
    <location>
        <begin position="278"/>
        <end position="289"/>
    </location>
</feature>
<feature type="disulfide bond" evidence="1">
    <location>
        <begin position="426"/>
        <end position="545"/>
    </location>
</feature>
<feature type="disulfide bond" description="Interchain">
    <location>
        <position position="561"/>
    </location>
</feature>
<feature type="splice variant" id="VSP_001462" description="In isoform 3." evidence="7">
    <original>ACDGELSSSGTSSSKGIIFYVLFSILYLIFY</original>
    <variation>GNVFAFHMQKVRTPAKTYHFGVIVAHLLLLSLPTASDVPRLASSKWWAHSDPLCSRRCWESWGRIL</variation>
    <location>
        <begin position="560"/>
        <end position="590"/>
    </location>
</feature>
<feature type="splice variant" id="VSP_001461" description="In isoform T." evidence="7">
    <original>ACDGELSSSGTSSSKGIIFYVLFSILYLIFY</original>
    <variation>ETIDEAERQWKTEFHRWSSYMMHWKNQFDQYSRHENCAEL</variation>
    <location>
        <begin position="560"/>
        <end position="590"/>
    </location>
</feature>
<feature type="sequence conflict" description="In Ref. 2; AA sequence." evidence="7" ref="2">
    <original>R</original>
    <variation>G</variation>
    <location>
        <position position="41"/>
    </location>
</feature>
<comment type="function">
    <text>Terminates signal transduction at the neuromuscular junction by rapid hydrolysis of the acetylcholine released into the synaptic cleft. May be involved in cell-cell interactions.</text>
</comment>
<comment type="catalytic activity">
    <reaction>
        <text>acetylcholine + H2O = choline + acetate + H(+)</text>
        <dbReference type="Rhea" id="RHEA:17561"/>
        <dbReference type="ChEBI" id="CHEBI:15354"/>
        <dbReference type="ChEBI" id="CHEBI:15355"/>
        <dbReference type="ChEBI" id="CHEBI:15377"/>
        <dbReference type="ChEBI" id="CHEBI:15378"/>
        <dbReference type="ChEBI" id="CHEBI:30089"/>
        <dbReference type="EC" id="3.1.1.7"/>
    </reaction>
</comment>
<comment type="subunit">
    <text evidence="4 5">Isoform H form is a homodimer; the asymmetric form is a disulfide-bonded oligomer composed of a collagenic subunit (Q) and a variable number of T catalytic subunits.</text>
</comment>
<comment type="subcellular location">
    <molecule>Isoform H</molecule>
    <subcellularLocation>
        <location>Cell membrane</location>
        <topology>Lipid-anchor</topology>
        <topology>GPI-anchor</topology>
    </subcellularLocation>
    <subcellularLocation>
        <location>Synapse</location>
    </subcellularLocation>
</comment>
<comment type="subcellular location">
    <molecule>Isoform T</molecule>
    <subcellularLocation>
        <location>Cell membrane</location>
        <topology>Peripheral membrane protein</topology>
    </subcellularLocation>
    <subcellularLocation>
        <location>Synapse</location>
    </subcellularLocation>
    <text>Attached to the membrane through disulfide linkage with the collagenic subunit, itself bound to the membrane.</text>
</comment>
<comment type="alternative products">
    <event type="alternative splicing"/>
    <isoform>
        <id>P07692-1</id>
        <name>H</name>
        <name>Globular</name>
        <sequence type="displayed"/>
    </isoform>
    <isoform>
        <id>P07692-2</id>
        <name>T</name>
        <sequence type="described" ref="VSP_001461"/>
    </isoform>
    <isoform>
        <id>P07692-3</id>
        <name>3</name>
        <sequence type="described" ref="VSP_001462"/>
    </isoform>
    <text>Additional isoforms seem to exist.</text>
</comment>
<comment type="tissue specificity">
    <text>Found in the synapses and to a lower extent in extrajunctional areas of muscle and nerve, and on erythrocyte membranes.</text>
</comment>
<comment type="PTM">
    <text evidence="1">An interchain disulfide bond is present in what becomes position 596 of the T isoform.</text>
</comment>
<comment type="miscellaneous">
    <molecule>Isoform H</molecule>
    <text>GPI-anchored form.</text>
</comment>
<comment type="similarity">
    <text evidence="7">Belongs to the type-B carboxylesterase/lipase family.</text>
</comment>
<keyword id="KW-0025">Alternative splicing</keyword>
<keyword id="KW-1003">Cell membrane</keyword>
<keyword id="KW-0903">Direct protein sequencing</keyword>
<keyword id="KW-1015">Disulfide bond</keyword>
<keyword id="KW-0325">Glycoprotein</keyword>
<keyword id="KW-0336">GPI-anchor</keyword>
<keyword id="KW-0378">Hydrolase</keyword>
<keyword id="KW-0449">Lipoprotein</keyword>
<keyword id="KW-0472">Membrane</keyword>
<keyword id="KW-0531">Neurotransmitter degradation</keyword>
<keyword id="KW-0719">Serine esterase</keyword>
<keyword id="KW-0732">Signal</keyword>
<keyword id="KW-0770">Synapse</keyword>
<sequence>MREMNLLVTSSLGVLLHLVVLCQADDDSELLVNTKSGKVMRTRIPVLSSHISAFLGIPFAEPPVGNMRFRRPEPKKPWSGVWNASTYPNNCQQYVDEQFPGFPGSEMWNPNREMSEDCLYLNIWVPSPRPKSATVMLWIYGGGFYSGSSTLDVYNGKYLAYTEEVVLVSLSYRVGAFGFLALHGSQEAPGNMGLLDQRMALQWVHDNIQFFGGDPKTVTLFGESAGRASVGMHILSPGSRDLFRRAILQSGSPNCPWASVSVAEGRRRAVELRRNLNCNLNSDEDLIQCLREKKPQELIDVEWNVLPFDSIFRFSFVPVIDGEFFPTSLESMLNAGNFKKTQILLGVNKDEGSFFLLYGAPGFSKDSESKISREDFMSGVKLSVPHANDLGLDAVTLQYTDWMDDNNGIKNRDGLDDIVGDHNVICPLMHFVNKYTKFGNGTYLYFFNHRASNLVWPEWMGVIHGYEIEFVFGLPLVKELNYTAEEEALSRRIMHYWATFAKTGNPNEPHSQESKWPLFTTKEQKFIDLNTEPIKVHQRLRVQMCVFWNQFLPKLLNATACDGELSSSGTSSSKGIIFYVLFSILYLIFY</sequence>
<evidence type="ECO:0000250" key="1"/>
<evidence type="ECO:0000255" key="2"/>
<evidence type="ECO:0000255" key="3">
    <source>
        <dbReference type="PROSITE-ProRule" id="PRU10039"/>
    </source>
</evidence>
<evidence type="ECO:0000269" key="4">
    <source>
    </source>
</evidence>
<evidence type="ECO:0000269" key="5">
    <source>
    </source>
</evidence>
<evidence type="ECO:0000269" key="6">
    <source>
    </source>
</evidence>
<evidence type="ECO:0000305" key="7"/>
<accession>P07692</accession>
<dbReference type="EC" id="3.1.1.7"/>
<dbReference type="EMBL" id="X05497">
    <property type="protein sequence ID" value="CAA29047.1"/>
    <property type="molecule type" value="mRNA"/>
</dbReference>
<dbReference type="EMBL" id="X13172">
    <property type="protein sequence ID" value="CAA31570.1"/>
    <property type="molecule type" value="mRNA"/>
</dbReference>
<dbReference type="EMBL" id="X13174">
    <property type="protein sequence ID" value="CAA31572.1"/>
    <property type="molecule type" value="mRNA"/>
</dbReference>
<dbReference type="EMBL" id="X13173">
    <property type="protein sequence ID" value="CAA31571.1"/>
    <property type="molecule type" value="mRNA"/>
</dbReference>
<dbReference type="PIR" id="A38868">
    <property type="entry name" value="A38868"/>
</dbReference>
<dbReference type="PIR" id="S01293">
    <property type="entry name" value="S01293"/>
</dbReference>
<dbReference type="SMR" id="P07692"/>
<dbReference type="BindingDB" id="P07692"/>
<dbReference type="ESTHER" id="torma-ACHE">
    <property type="family name" value="ACHE"/>
</dbReference>
<dbReference type="MEROPS" id="S09.980"/>
<dbReference type="GlyCosmos" id="P07692">
    <property type="glycosylation" value="4 sites, No reported glycans"/>
</dbReference>
<dbReference type="GO" id="GO:0005615">
    <property type="term" value="C:extracellular space"/>
    <property type="evidence" value="ECO:0007669"/>
    <property type="project" value="TreeGrafter"/>
</dbReference>
<dbReference type="GO" id="GO:0005886">
    <property type="term" value="C:plasma membrane"/>
    <property type="evidence" value="ECO:0007669"/>
    <property type="project" value="UniProtKB-SubCell"/>
</dbReference>
<dbReference type="GO" id="GO:0098552">
    <property type="term" value="C:side of membrane"/>
    <property type="evidence" value="ECO:0007669"/>
    <property type="project" value="UniProtKB-KW"/>
</dbReference>
<dbReference type="GO" id="GO:0045202">
    <property type="term" value="C:synapse"/>
    <property type="evidence" value="ECO:0007669"/>
    <property type="project" value="UniProtKB-SubCell"/>
</dbReference>
<dbReference type="GO" id="GO:0043083">
    <property type="term" value="C:synaptic cleft"/>
    <property type="evidence" value="ECO:0007669"/>
    <property type="project" value="GOC"/>
</dbReference>
<dbReference type="GO" id="GO:0003990">
    <property type="term" value="F:acetylcholinesterase activity"/>
    <property type="evidence" value="ECO:0007669"/>
    <property type="project" value="UniProtKB-EC"/>
</dbReference>
<dbReference type="GO" id="GO:0001507">
    <property type="term" value="P:acetylcholine catabolic process in synaptic cleft"/>
    <property type="evidence" value="ECO:0007669"/>
    <property type="project" value="InterPro"/>
</dbReference>
<dbReference type="GO" id="GO:0019695">
    <property type="term" value="P:choline metabolic process"/>
    <property type="evidence" value="ECO:0007669"/>
    <property type="project" value="TreeGrafter"/>
</dbReference>
<dbReference type="CDD" id="cd00312">
    <property type="entry name" value="Esterase_lipase"/>
    <property type="match status" value="1"/>
</dbReference>
<dbReference type="FunFam" id="3.40.50.1820:FF:000029">
    <property type="entry name" value="Acetylcholinesterase"/>
    <property type="match status" value="1"/>
</dbReference>
<dbReference type="Gene3D" id="3.40.50.1820">
    <property type="entry name" value="alpha/beta hydrolase"/>
    <property type="match status" value="1"/>
</dbReference>
<dbReference type="InterPro" id="IPR029058">
    <property type="entry name" value="AB_hydrolase_fold"/>
</dbReference>
<dbReference type="InterPro" id="IPR050654">
    <property type="entry name" value="AChE-related_enzymes"/>
</dbReference>
<dbReference type="InterPro" id="IPR000908">
    <property type="entry name" value="Acylcholinesterase_fish/snake"/>
</dbReference>
<dbReference type="InterPro" id="IPR002018">
    <property type="entry name" value="CarbesteraseB"/>
</dbReference>
<dbReference type="InterPro" id="IPR019826">
    <property type="entry name" value="Carboxylesterase_B_AS"/>
</dbReference>
<dbReference type="InterPro" id="IPR019819">
    <property type="entry name" value="Carboxylesterase_B_CS"/>
</dbReference>
<dbReference type="InterPro" id="IPR000997">
    <property type="entry name" value="Cholinesterase"/>
</dbReference>
<dbReference type="PANTHER" id="PTHR43918">
    <property type="entry name" value="ACETYLCHOLINESTERASE"/>
    <property type="match status" value="1"/>
</dbReference>
<dbReference type="PANTHER" id="PTHR43918:SF11">
    <property type="entry name" value="ACETYLCHOLINESTERASE"/>
    <property type="match status" value="1"/>
</dbReference>
<dbReference type="Pfam" id="PF00135">
    <property type="entry name" value="COesterase"/>
    <property type="match status" value="1"/>
</dbReference>
<dbReference type="PRINTS" id="PR00879">
    <property type="entry name" value="ACHEFISH"/>
</dbReference>
<dbReference type="PRINTS" id="PR00878">
    <property type="entry name" value="CHOLNESTRASE"/>
</dbReference>
<dbReference type="SUPFAM" id="SSF53474">
    <property type="entry name" value="alpha/beta-Hydrolases"/>
    <property type="match status" value="1"/>
</dbReference>
<dbReference type="PROSITE" id="PS00122">
    <property type="entry name" value="CARBOXYLESTERASE_B_1"/>
    <property type="match status" value="1"/>
</dbReference>
<dbReference type="PROSITE" id="PS00941">
    <property type="entry name" value="CARBOXYLESTERASE_B_2"/>
    <property type="match status" value="1"/>
</dbReference>
<organism>
    <name type="scientific">Torpedo marmorata</name>
    <name type="common">Marbled electric ray</name>
    <dbReference type="NCBI Taxonomy" id="7788"/>
    <lineage>
        <taxon>Eukaryota</taxon>
        <taxon>Metazoa</taxon>
        <taxon>Chordata</taxon>
        <taxon>Craniata</taxon>
        <taxon>Vertebrata</taxon>
        <taxon>Chondrichthyes</taxon>
        <taxon>Elasmobranchii</taxon>
        <taxon>Batoidea</taxon>
        <taxon>Torpediniformes</taxon>
        <taxon>Torpedinidae</taxon>
        <taxon>Torpedo</taxon>
    </lineage>
</organism>
<proteinExistence type="evidence at protein level"/>